<gene>
    <name evidence="2" type="primary">S</name>
    <name type="ORF">3</name>
</gene>
<keyword id="KW-0175">Coiled coil</keyword>
<keyword id="KW-1015">Disulfide bond</keyword>
<keyword id="KW-1170">Fusion of virus membrane with host endosomal membrane</keyword>
<keyword id="KW-1168">Fusion of virus membrane with host membrane</keyword>
<keyword id="KW-0325">Glycoprotein</keyword>
<keyword id="KW-1032">Host cell membrane</keyword>
<keyword id="KW-1043">Host membrane</keyword>
<keyword id="KW-0945">Host-virus interaction</keyword>
<keyword id="KW-0449">Lipoprotein</keyword>
<keyword id="KW-0472">Membrane</keyword>
<keyword id="KW-0564">Palmitate</keyword>
<keyword id="KW-0732">Signal</keyword>
<keyword id="KW-0812">Transmembrane</keyword>
<keyword id="KW-1133">Transmembrane helix</keyword>
<keyword id="KW-1161">Viral attachment to host cell</keyword>
<keyword id="KW-0261">Viral envelope protein</keyword>
<keyword id="KW-1162">Viral penetration into host cytoplasm</keyword>
<keyword id="KW-0946">Virion</keyword>
<keyword id="KW-0843">Virulence</keyword>
<keyword id="KW-1160">Virus entry into host cell</keyword>
<reference key="1">
    <citation type="journal article" date="2001" name="J. Gen. Virol.">
        <title>Comparison of genomic and predicted amino acid sequences of respiratory and enteric bovine coronaviruses isolated from the same animal with fatal shipping pneumonia.</title>
        <authorList>
            <person name="Chouljenko V.N."/>
            <person name="Lin X.Q."/>
            <person name="Storz J."/>
            <person name="Kousoulas K.G."/>
            <person name="Gorbalenya A.E."/>
        </authorList>
    </citation>
    <scope>NUCLEOTIDE SEQUENCE [GENOMIC RNA]</scope>
</reference>
<evidence type="ECO:0000250" key="1"/>
<evidence type="ECO:0000255" key="2">
    <source>
        <dbReference type="HAMAP-Rule" id="MF_04099"/>
    </source>
</evidence>
<evidence type="ECO:0000255" key="3">
    <source>
        <dbReference type="PROSITE-ProRule" id="PRU01269"/>
    </source>
</evidence>
<evidence type="ECO:0000255" key="4">
    <source>
        <dbReference type="PROSITE-ProRule" id="PRU01270"/>
    </source>
</evidence>
<organism>
    <name type="scientific">Bovine coronavirus (strain 98TXSF-110-ENT)</name>
    <name type="common">BCoV-ENT</name>
    <name type="synonym">BCV</name>
    <dbReference type="NCBI Taxonomy" id="233262"/>
    <lineage>
        <taxon>Viruses</taxon>
        <taxon>Riboviria</taxon>
        <taxon>Orthornavirae</taxon>
        <taxon>Pisuviricota</taxon>
        <taxon>Pisoniviricetes</taxon>
        <taxon>Nidovirales</taxon>
        <taxon>Cornidovirineae</taxon>
        <taxon>Coronaviridae</taxon>
        <taxon>Orthocoronavirinae</taxon>
        <taxon>Betacoronavirus</taxon>
        <taxon>Embecovirus</taxon>
        <taxon>Betacoronavirus 1</taxon>
    </lineage>
</organism>
<proteinExistence type="inferred from homology"/>
<feature type="signal peptide" evidence="2">
    <location>
        <begin position="1"/>
        <end position="13"/>
    </location>
</feature>
<feature type="chain" id="PRO_0000283907" description="Spike glycoprotein">
    <location>
        <begin position="14"/>
        <end position="1363"/>
    </location>
</feature>
<feature type="chain" id="PRO_0000283908" description="Spike protein S1">
    <location>
        <begin position="14"/>
        <end position="768"/>
    </location>
</feature>
<feature type="chain" id="PRO_0000283909" description="Spike protein S2">
    <location>
        <begin position="769"/>
        <end position="1363"/>
    </location>
</feature>
<feature type="chain" id="PRO_0000444068" description="Spike protein S2'" evidence="2">
    <location>
        <begin position="914"/>
        <end position="1363"/>
    </location>
</feature>
<feature type="topological domain" description="Extracellular" evidence="2">
    <location>
        <begin position="14"/>
        <end position="1307"/>
    </location>
</feature>
<feature type="transmembrane region" description="Helical" evidence="2">
    <location>
        <begin position="1308"/>
        <end position="1328"/>
    </location>
</feature>
<feature type="topological domain" description="Cytoplasmic" evidence="2">
    <location>
        <begin position="1329"/>
        <end position="1363"/>
    </location>
</feature>
<feature type="domain" description="BetaCoV S1-NTD" evidence="4">
    <location>
        <begin position="15"/>
        <end position="298"/>
    </location>
</feature>
<feature type="domain" description="BetaCoV S1-CTD" evidence="3">
    <location>
        <begin position="329"/>
        <end position="617"/>
    </location>
</feature>
<feature type="region of interest" description="Fusion peptide 1" evidence="2">
    <location>
        <begin position="914"/>
        <end position="935"/>
    </location>
</feature>
<feature type="region of interest" description="Fusion peptide 2" evidence="2">
    <location>
        <begin position="933"/>
        <end position="953"/>
    </location>
</feature>
<feature type="region of interest" description="Heptad repeat 1" evidence="2">
    <location>
        <begin position="1014"/>
        <end position="1064"/>
    </location>
</feature>
<feature type="region of interest" description="Heptad repeat 2" evidence="2">
    <location>
        <begin position="1258"/>
        <end position="1296"/>
    </location>
</feature>
<feature type="coiled-coil region" evidence="2">
    <location>
        <begin position="1043"/>
        <end position="1087"/>
    </location>
</feature>
<feature type="coiled-coil region" evidence="2">
    <location>
        <begin position="1269"/>
        <end position="1297"/>
    </location>
</feature>
<feature type="short sequence motif" description="KxHxx" evidence="2">
    <location>
        <begin position="1359"/>
        <end position="1363"/>
    </location>
</feature>
<feature type="site" description="Cleavage; by host" evidence="1">
    <location>
        <begin position="768"/>
        <end position="769"/>
    </location>
</feature>
<feature type="site" description="Cleavage" evidence="2">
    <location>
        <begin position="913"/>
        <end position="914"/>
    </location>
</feature>
<feature type="glycosylation site" description="N-linked (GlcNAc...) asparagine; by host" evidence="2">
    <location>
        <position position="59"/>
    </location>
</feature>
<feature type="glycosylation site" description="N-linked (GlcNAc...) asparagine; by host" evidence="2">
    <location>
        <position position="133"/>
    </location>
</feature>
<feature type="glycosylation site" description="N-linked (GlcNAc...) asparagine; by host" evidence="2">
    <location>
        <position position="198"/>
    </location>
</feature>
<feature type="glycosylation site" description="N-linked (GlcNAc...) asparagine; by host" evidence="2">
    <location>
        <position position="359"/>
    </location>
</feature>
<feature type="glycosylation site" description="N-linked (GlcNAc...) asparagine; by host" evidence="2">
    <location>
        <position position="437"/>
    </location>
</feature>
<feature type="glycosylation site" description="N-linked (GlcNAc...) asparagine; by host" evidence="2">
    <location>
        <position position="649"/>
    </location>
</feature>
<feature type="glycosylation site" description="N-linked (GlcNAc...) asparagine; by host" evidence="2">
    <location>
        <position position="676"/>
    </location>
</feature>
<feature type="glycosylation site" description="N-linked (GlcNAc...) asparagine; by host" evidence="2">
    <location>
        <position position="696"/>
    </location>
</feature>
<feature type="glycosylation site" description="N-linked (GlcNAc...) asparagine; by host" evidence="2">
    <location>
        <position position="714"/>
    </location>
</feature>
<feature type="glycosylation site" description="N-linked (GlcNAc...) asparagine; by host" evidence="2">
    <location>
        <position position="739"/>
    </location>
</feature>
<feature type="glycosylation site" description="N-linked (GlcNAc...) asparagine; by host" evidence="2">
    <location>
        <position position="788"/>
    </location>
</feature>
<feature type="glycosylation site" description="N-linked (GlcNAc...) asparagine; by host" evidence="2">
    <location>
        <position position="937"/>
    </location>
</feature>
<feature type="glycosylation site" description="N-linked (GlcNAc...) asparagine; by host" evidence="2">
    <location>
        <position position="1194"/>
    </location>
</feature>
<feature type="glycosylation site" description="N-linked (GlcNAc...) asparagine; by host" evidence="2">
    <location>
        <position position="1224"/>
    </location>
</feature>
<feature type="glycosylation site" description="N-linked (GlcNAc...) asparagine; by host" evidence="2">
    <location>
        <position position="1234"/>
    </location>
</feature>
<feature type="glycosylation site" description="N-linked (GlcNAc...) asparagine; by host" evidence="2">
    <location>
        <position position="1253"/>
    </location>
</feature>
<feature type="glycosylation site" description="N-linked (GlcNAc...) asparagine; by host" evidence="2">
    <location>
        <position position="1267"/>
    </location>
</feature>
<feature type="glycosylation site" description="N-linked (GlcNAc...) asparagine; by host" evidence="2">
    <location>
        <position position="1288"/>
    </location>
</feature>
<feature type="disulfide bond" evidence="4">
    <location>
        <begin position="21"/>
        <end position="165"/>
    </location>
</feature>
<feature type="disulfide bond" evidence="4">
    <location>
        <begin position="160"/>
        <end position="193"/>
    </location>
</feature>
<feature type="disulfide bond" evidence="4">
    <location>
        <begin position="172"/>
        <end position="252"/>
    </location>
</feature>
<feature type="disulfide bond" evidence="4">
    <location>
        <begin position="286"/>
        <end position="296"/>
    </location>
</feature>
<feature type="disulfide bond" evidence="3">
    <location>
        <begin position="331"/>
        <end position="356"/>
    </location>
</feature>
<feature type="disulfide bond" evidence="3">
    <location>
        <begin position="374"/>
        <end position="427"/>
    </location>
</feature>
<feature type="disulfide bond" evidence="3">
    <location>
        <begin position="386"/>
        <end position="615"/>
    </location>
</feature>
<feature type="disulfide bond" evidence="2">
    <location>
        <begin position="938"/>
        <end position="949"/>
    </location>
</feature>
<organismHost>
    <name type="scientific">Bos taurus</name>
    <name type="common">Bovine</name>
    <dbReference type="NCBI Taxonomy" id="9913"/>
</organismHost>
<dbReference type="EMBL" id="AF391541">
    <property type="protein sequence ID" value="AAK83356.1"/>
    <property type="molecule type" value="Genomic_RNA"/>
</dbReference>
<dbReference type="RefSeq" id="NP_150077.1">
    <property type="nucleotide sequence ID" value="NC_003045.1"/>
</dbReference>
<dbReference type="SMR" id="Q91A26"/>
<dbReference type="GlyCosmos" id="Q91A26">
    <property type="glycosylation" value="18 sites, No reported glycans"/>
</dbReference>
<dbReference type="GeneID" id="921689"/>
<dbReference type="KEGG" id="vg:921689"/>
<dbReference type="Proteomes" id="UP000008570">
    <property type="component" value="Segment"/>
</dbReference>
<dbReference type="GO" id="GO:0044173">
    <property type="term" value="C:host cell endoplasmic reticulum-Golgi intermediate compartment membrane"/>
    <property type="evidence" value="ECO:0007669"/>
    <property type="project" value="UniProtKB-SubCell"/>
</dbReference>
<dbReference type="GO" id="GO:0020002">
    <property type="term" value="C:host cell plasma membrane"/>
    <property type="evidence" value="ECO:0007669"/>
    <property type="project" value="UniProtKB-SubCell"/>
</dbReference>
<dbReference type="GO" id="GO:0016020">
    <property type="term" value="C:membrane"/>
    <property type="evidence" value="ECO:0007669"/>
    <property type="project" value="UniProtKB-UniRule"/>
</dbReference>
<dbReference type="GO" id="GO:0019031">
    <property type="term" value="C:viral envelope"/>
    <property type="evidence" value="ECO:0007669"/>
    <property type="project" value="UniProtKB-UniRule"/>
</dbReference>
<dbReference type="GO" id="GO:0055036">
    <property type="term" value="C:virion membrane"/>
    <property type="evidence" value="ECO:0007669"/>
    <property type="project" value="UniProtKB-SubCell"/>
</dbReference>
<dbReference type="GO" id="GO:0075509">
    <property type="term" value="P:endocytosis involved in viral entry into host cell"/>
    <property type="evidence" value="ECO:0007669"/>
    <property type="project" value="UniProtKB-UniRule"/>
</dbReference>
<dbReference type="GO" id="GO:0039654">
    <property type="term" value="P:fusion of virus membrane with host endosome membrane"/>
    <property type="evidence" value="ECO:0007669"/>
    <property type="project" value="UniProtKB-UniRule"/>
</dbReference>
<dbReference type="GO" id="GO:0019064">
    <property type="term" value="P:fusion of virus membrane with host plasma membrane"/>
    <property type="evidence" value="ECO:0007669"/>
    <property type="project" value="UniProtKB-UniRule"/>
</dbReference>
<dbReference type="GO" id="GO:0046813">
    <property type="term" value="P:receptor-mediated virion attachment to host cell"/>
    <property type="evidence" value="ECO:0007669"/>
    <property type="project" value="UniProtKB-UniRule"/>
</dbReference>
<dbReference type="CDD" id="cd21485">
    <property type="entry name" value="HCoV-OC43-like_Spike_S1_RBD"/>
    <property type="match status" value="1"/>
</dbReference>
<dbReference type="CDD" id="cd22380">
    <property type="entry name" value="HKU1-CoV-like_Spike_SD1-2_S1-S2_S2"/>
    <property type="match status" value="1"/>
</dbReference>
<dbReference type="CDD" id="cd21625">
    <property type="entry name" value="MHV-like_Spike_S1_NTD"/>
    <property type="match status" value="1"/>
</dbReference>
<dbReference type="FunFam" id="1.20.5.300:FF:000003">
    <property type="entry name" value="Spike glycoprotein"/>
    <property type="match status" value="1"/>
</dbReference>
<dbReference type="FunFam" id="1.20.5.300:FF:000006">
    <property type="entry name" value="Spike glycoprotein"/>
    <property type="match status" value="1"/>
</dbReference>
<dbReference type="FunFam" id="2.60.120.960:FF:000002">
    <property type="entry name" value="Spike glycoprotein"/>
    <property type="match status" value="1"/>
</dbReference>
<dbReference type="FunFam" id="3.30.70.1840:FF:000003">
    <property type="entry name" value="Spike glycoprotein"/>
    <property type="match status" value="1"/>
</dbReference>
<dbReference type="Gene3D" id="1.20.5.300">
    <property type="match status" value="2"/>
</dbReference>
<dbReference type="Gene3D" id="3.30.70.1840">
    <property type="match status" value="1"/>
</dbReference>
<dbReference type="Gene3D" id="2.60.120.960">
    <property type="entry name" value="Spike glycoprotein, N-terminal domain"/>
    <property type="match status" value="1"/>
</dbReference>
<dbReference type="HAMAP" id="MF_04099">
    <property type="entry name" value="BETA_CORONA_SPIKE"/>
    <property type="match status" value="1"/>
</dbReference>
<dbReference type="InterPro" id="IPR032500">
    <property type="entry name" value="bCoV_S1_N"/>
</dbReference>
<dbReference type="InterPro" id="IPR042578">
    <property type="entry name" value="BETA_CORONA_SPIKE"/>
</dbReference>
<dbReference type="InterPro" id="IPR043607">
    <property type="entry name" value="CoV_S1_C"/>
</dbReference>
<dbReference type="InterPro" id="IPR043473">
    <property type="entry name" value="S2_sf_CoV"/>
</dbReference>
<dbReference type="InterPro" id="IPR043002">
    <property type="entry name" value="Spike_N_sf"/>
</dbReference>
<dbReference type="InterPro" id="IPR044339">
    <property type="entry name" value="Spike_S1_NTD_MHV-like"/>
</dbReference>
<dbReference type="InterPro" id="IPR018548">
    <property type="entry name" value="Spike_S1_RBD_bCoV"/>
</dbReference>
<dbReference type="InterPro" id="IPR044372">
    <property type="entry name" value="Spike_S1_RBD_HCoV-OC43-like"/>
</dbReference>
<dbReference type="InterPro" id="IPR036326">
    <property type="entry name" value="Spike_S1_RBD_sf_bCoV"/>
</dbReference>
<dbReference type="InterPro" id="IPR002552">
    <property type="entry name" value="Spike_S2_CoV"/>
</dbReference>
<dbReference type="InterPro" id="IPR043614">
    <property type="entry name" value="Spike_S2_CoV_C"/>
</dbReference>
<dbReference type="InterPro" id="IPR044873">
    <property type="entry name" value="Spike_S2_CoV_HR1"/>
</dbReference>
<dbReference type="InterPro" id="IPR044874">
    <property type="entry name" value="Spike_S2_CoV_HR2"/>
</dbReference>
<dbReference type="Pfam" id="PF16451">
    <property type="entry name" value="bCoV_S1_N"/>
    <property type="match status" value="1"/>
</dbReference>
<dbReference type="Pfam" id="PF09408">
    <property type="entry name" value="bCoV_S1_RBD"/>
    <property type="match status" value="1"/>
</dbReference>
<dbReference type="Pfam" id="PF19209">
    <property type="entry name" value="CoV_S1_C"/>
    <property type="match status" value="1"/>
</dbReference>
<dbReference type="Pfam" id="PF01601">
    <property type="entry name" value="CoV_S2"/>
    <property type="match status" value="1"/>
</dbReference>
<dbReference type="Pfam" id="PF19214">
    <property type="entry name" value="CoV_S2_C"/>
    <property type="match status" value="1"/>
</dbReference>
<dbReference type="SUPFAM" id="SSF111474">
    <property type="entry name" value="Coronavirus S2 glycoprotein"/>
    <property type="match status" value="2"/>
</dbReference>
<dbReference type="SUPFAM" id="SSF143587">
    <property type="entry name" value="SARS receptor-binding domain-like"/>
    <property type="match status" value="1"/>
</dbReference>
<dbReference type="PROSITE" id="PS51921">
    <property type="entry name" value="BCOV_S1_CTD"/>
    <property type="match status" value="1"/>
</dbReference>
<dbReference type="PROSITE" id="PS51922">
    <property type="entry name" value="BCOV_S1_NTD"/>
    <property type="match status" value="1"/>
</dbReference>
<dbReference type="PROSITE" id="PS51923">
    <property type="entry name" value="COV_S2_HR1"/>
    <property type="match status" value="1"/>
</dbReference>
<dbReference type="PROSITE" id="PS51924">
    <property type="entry name" value="COV_S2_HR2"/>
    <property type="match status" value="1"/>
</dbReference>
<accession>Q91A26</accession>
<protein>
    <recommendedName>
        <fullName evidence="2">Spike glycoprotein</fullName>
        <shortName evidence="2">S glycoprotein</shortName>
    </recommendedName>
    <alternativeName>
        <fullName evidence="2">E2</fullName>
    </alternativeName>
    <alternativeName>
        <fullName evidence="2">Peplomer protein</fullName>
    </alternativeName>
    <component>
        <recommendedName>
            <fullName evidence="2">Spike protein S1</fullName>
        </recommendedName>
    </component>
    <component>
        <recommendedName>
            <fullName evidence="2">Spike protein S2</fullName>
        </recommendedName>
    </component>
    <component>
        <recommendedName>
            <fullName evidence="2">Spike protein S2'</fullName>
        </recommendedName>
    </component>
</protein>
<sequence>MFLILLISLPTAFAVIGDLKCTTVSINDVDTGVPSISTDTVDVTNGLGTYYVLDRVYLNTTLLLNGYYPTSGSTYRNMALKGTLLLSTLWFKPPFLSDFTNGIFAKVKNTKVIKDGVMYSEFPAITIGSTFVNTSYSVVVQPHTTILGNKLQGFLEISVCQYTMCEYPNTICNPNLGNQRVELWHWDTGVVSCLYKRNFTYDVNADYLYFHFYQEGGTFYAYFTDTGVVTKFLFNVYLGTVLSHYYVMPLTCNSALTLEYWVTPLTSKQYLLAFNQDGVIFNAVDCKSDFMSEIKCKTLSIAPSTGVYELNGYTVQPIADVYRRIPNLPDCNIEAWLNDKSVPSPLNWERKTFSNCNFNMSSLMSFIQAYSFTCNNIDAAKIYGMCFSSITIDKFAIPNGRKVDLQLGNLGYLQSFNYRIDTTATSCQLYYNLPAANVSVSRFNPSTWNRRFGFTEQSVFKPQPAGVFTDHDVVYAQHCFKASTNFCPCKLDGSLCVGNGPGIDAGYKTSGIGTCPAGTNYLTCHNAAQCDCLCTPDPITSKATGPYKCPQTKYLVGIGEHCSGLAIKSDHCGGNPCTCQPQAFLGWSVDSCLQGDRCNIFANFILHDVNSGTTCSTDLQKSNTDIILGVCVNYDLYGITGQGIFVEVNATYYNSWQNLLYDSNGNLYGFRDYLTNRTFMIRSCYSGRVSAAFHANSSEPALLFRNIKCNYVFNNTLSRQLQPINYFDSYLGCVVNADNSTSSVVQTCDLTVGSGYCVDYSTKRRSRRSITTGYRFTNFEPFTVNSVNDSLEPVGGLYEIQIPSEFTIGNMEEFIQTSSPKVTIDCSAFVCGDYAACKSQLVEYGSFCDNINAILTEVNELLDTTQLQVANSLMNGVTLSTKLKDGVNFNVDDINFSPVLGCLGSDCNKVSSRSAIEDLLFSKVKLSDVGFVEAYNNCTGGAEIRDLICVQSYNGIKVLPPLLSENQISGYTLAATSASLFPPWSAAAGVPFYLNVQYRINGIGVTMDVLSQNQKLIANAFNNALGAIQEGFDATNSALVKIQAVVNANAEALNNLLQQLSNRFGAISSSLQEILSRLDALEAQAQIDRLINGRLTALNAYVSQQLSDSTLVKFSAAQAMEKVNECVKSQSSRINFCGNGNHIISLVQNAPYGLYFIHFSYVPTKYVTAKVSPGLCIAGDRGIAPKSGYFVNVNNTWMFTGSGYYYPEPITGNNVVVMSTCAVNYTKAPDVMLNISTPNLPYFKEELDQWFKNQTSVAPDLSLDYINVTFLDLQDEMNRLQEAIKVLNQSYINLKDIGTYEYYVKWPWYVWLLIGFAGVAMLVLLFFICCCTGCGTSCFKKCGGCCDDYTGHQELVIKTSHED</sequence>
<comment type="function">
    <molecule>Spike protein S1</molecule>
    <text evidence="2">Attaches the virion to the cell membrane by interacting with host receptor, initiating the infection.</text>
</comment>
<comment type="function">
    <molecule>Spike protein S2</molecule>
    <text evidence="2">Mediates fusion of the virion and cellular membranes by acting as a class I viral fusion protein. Under the current model, the protein has at least three conformational states: pre-fusion native state, pre-hairpin intermediate state, and post-fusion hairpin state. During viral and target cell membrane fusion, the coiled coil regions (heptad repeats) assume a trimer-of-hairpins structure, positioning the fusion peptide in close proximity to the C-terminal region of the ectodomain. The formation of this structure appears to drive apposition and subsequent fusion of viral and target cell membranes.</text>
</comment>
<comment type="function">
    <molecule>Spike protein S2'</molecule>
    <text evidence="2">Acts as a viral fusion peptide which is unmasked following S2 cleavage occurring upon virus endocytosis.</text>
</comment>
<comment type="subunit">
    <text evidence="2">Homotrimer; each monomer consists of a S1 and a S2 subunit. The resulting peplomers protrude from the virus surface as spikes.</text>
</comment>
<comment type="subcellular location">
    <subcellularLocation>
        <location evidence="2">Virion membrane</location>
        <topology evidence="2">Single-pass type I membrane protein</topology>
    </subcellularLocation>
    <subcellularLocation>
        <location evidence="2">Host endoplasmic reticulum-Golgi intermediate compartment membrane</location>
        <topology evidence="2">Single-pass type I membrane protein</topology>
    </subcellularLocation>
    <subcellularLocation>
        <location evidence="2">Host cell membrane</location>
        <topology evidence="2">Single-pass type I membrane protein</topology>
    </subcellularLocation>
    <text evidence="2">Accumulates in the endoplasmic reticulum-Golgi intermediate compartment, where it participates in virus particle assembly. Some S oligomers are transported to the host plasma membrane, where they may mediate cell-cell fusion.</text>
</comment>
<comment type="domain">
    <text evidence="2">Fusion peptide 1 (FP1) and fusion peptide 2 (FP2) function cooperatively and have a membrane-ordering effect on lipid headgroups and shallow hydrophobic regions of target bilayers. They are considered as two domains of an extended, bipartite FP. The membrane-ordering activity is calcium-dependent and also dependent on correct folding, which is maintained by an internal disulfide bond in FP2.</text>
</comment>
<comment type="PTM">
    <text evidence="2">Specific enzymatic cleavages in vivo yield mature proteins. The precursor is processed into S1 and S2 by host cell furin or another cellular protease to yield the mature S1 and S2 proteins. Additionally, a second cleavage leads to the release of a fusion peptide after viral attachment to host cell receptor.</text>
</comment>
<comment type="PTM">
    <text evidence="2">The cytoplasmic Cys-rich domain is palmitoylated. Spike glycoprotein is digested within host endosomes.</text>
</comment>
<comment type="similarity">
    <text evidence="2">Belongs to the betacoronaviruses spike protein family.</text>
</comment>
<name>SPIKE_CVBEN</name>